<protein>
    <recommendedName>
        <fullName>Tripartite motif-containing protein 5</fullName>
        <ecNumber>2.3.2.27</ecNumber>
    </recommendedName>
    <alternativeName>
        <fullName evidence="8">RING-type E3 ubiquitin transferase TRIM5</fullName>
    </alternativeName>
    <alternativeName>
        <fullName>TRIM5alpha</fullName>
    </alternativeName>
</protein>
<dbReference type="EC" id="2.3.2.27"/>
<dbReference type="EMBL" id="AY843508">
    <property type="protein sequence ID" value="AAV91979.1"/>
    <property type="molecule type" value="Genomic_DNA"/>
</dbReference>
<dbReference type="SMR" id="Q5D7I9"/>
<dbReference type="UniPathway" id="UPA00143"/>
<dbReference type="GO" id="GO:0005634">
    <property type="term" value="C:nucleus"/>
    <property type="evidence" value="ECO:0007669"/>
    <property type="project" value="UniProtKB-SubCell"/>
</dbReference>
<dbReference type="GO" id="GO:0000932">
    <property type="term" value="C:P-body"/>
    <property type="evidence" value="ECO:0000250"/>
    <property type="project" value="UniProtKB"/>
</dbReference>
<dbReference type="GO" id="GO:0038187">
    <property type="term" value="F:pattern recognition receptor activity"/>
    <property type="evidence" value="ECO:0000250"/>
    <property type="project" value="UniProtKB"/>
</dbReference>
<dbReference type="GO" id="GO:0004842">
    <property type="term" value="F:ubiquitin-protein transferase activity"/>
    <property type="evidence" value="ECO:0000250"/>
    <property type="project" value="UniProtKB"/>
</dbReference>
<dbReference type="GO" id="GO:0008270">
    <property type="term" value="F:zinc ion binding"/>
    <property type="evidence" value="ECO:0007669"/>
    <property type="project" value="UniProtKB-KW"/>
</dbReference>
<dbReference type="GO" id="GO:0002218">
    <property type="term" value="P:activation of innate immune response"/>
    <property type="evidence" value="ECO:0000250"/>
    <property type="project" value="UniProtKB"/>
</dbReference>
<dbReference type="GO" id="GO:0006914">
    <property type="term" value="P:autophagy"/>
    <property type="evidence" value="ECO:0007669"/>
    <property type="project" value="UniProtKB-KW"/>
</dbReference>
<dbReference type="GO" id="GO:0051607">
    <property type="term" value="P:defense response to virus"/>
    <property type="evidence" value="ECO:0007669"/>
    <property type="project" value="UniProtKB-KW"/>
</dbReference>
<dbReference type="GO" id="GO:0045087">
    <property type="term" value="P:innate immune response"/>
    <property type="evidence" value="ECO:0007669"/>
    <property type="project" value="UniProtKB-KW"/>
</dbReference>
<dbReference type="GO" id="GO:0043123">
    <property type="term" value="P:positive regulation of canonical NF-kappaB signal transduction"/>
    <property type="evidence" value="ECO:0000250"/>
    <property type="project" value="UniProtKB"/>
</dbReference>
<dbReference type="GO" id="GO:0043410">
    <property type="term" value="P:positive regulation of MAPK cascade"/>
    <property type="evidence" value="ECO:0000250"/>
    <property type="project" value="UniProtKB"/>
</dbReference>
<dbReference type="GO" id="GO:0051092">
    <property type="term" value="P:positive regulation of NF-kappaB transcription factor activity"/>
    <property type="evidence" value="ECO:0000250"/>
    <property type="project" value="UniProtKB"/>
</dbReference>
<dbReference type="GO" id="GO:0070534">
    <property type="term" value="P:protein K63-linked ubiquitination"/>
    <property type="evidence" value="ECO:0000250"/>
    <property type="project" value="UniProtKB"/>
</dbReference>
<dbReference type="GO" id="GO:0031664">
    <property type="term" value="P:regulation of lipopolysaccharide-mediated signaling pathway"/>
    <property type="evidence" value="ECO:0000250"/>
    <property type="project" value="UniProtKB"/>
</dbReference>
<dbReference type="CDD" id="cd19761">
    <property type="entry name" value="Bbox2_TRIM5-like"/>
    <property type="match status" value="1"/>
</dbReference>
<dbReference type="CDD" id="cd16591">
    <property type="entry name" value="RING-HC_TRIM5-like_C-IV"/>
    <property type="match status" value="1"/>
</dbReference>
<dbReference type="CDD" id="cd15822">
    <property type="entry name" value="SPRY_PRY_TRIM5"/>
    <property type="match status" value="1"/>
</dbReference>
<dbReference type="FunFam" id="2.60.120.920:FF:000023">
    <property type="entry name" value="Tripartite motif-containing 5 (Predicted)"/>
    <property type="match status" value="1"/>
</dbReference>
<dbReference type="FunFam" id="3.30.160.60:FF:000386">
    <property type="entry name" value="Tripartite motif-containing 5 (Predicted)"/>
    <property type="match status" value="1"/>
</dbReference>
<dbReference type="FunFam" id="3.30.40.10:FF:000144">
    <property type="entry name" value="Tripartite motif-containing 5 (Predicted)"/>
    <property type="match status" value="1"/>
</dbReference>
<dbReference type="Gene3D" id="2.60.120.920">
    <property type="match status" value="1"/>
</dbReference>
<dbReference type="Gene3D" id="3.30.160.60">
    <property type="entry name" value="Classic Zinc Finger"/>
    <property type="match status" value="1"/>
</dbReference>
<dbReference type="Gene3D" id="3.30.40.10">
    <property type="entry name" value="Zinc/RING finger domain, C3HC4 (zinc finger)"/>
    <property type="match status" value="1"/>
</dbReference>
<dbReference type="InterPro" id="IPR001870">
    <property type="entry name" value="B30.2/SPRY"/>
</dbReference>
<dbReference type="InterPro" id="IPR043136">
    <property type="entry name" value="B30.2/SPRY_sf"/>
</dbReference>
<dbReference type="InterPro" id="IPR003879">
    <property type="entry name" value="Butyrophylin_SPRY"/>
</dbReference>
<dbReference type="InterPro" id="IPR013320">
    <property type="entry name" value="ConA-like_dom_sf"/>
</dbReference>
<dbReference type="InterPro" id="IPR003877">
    <property type="entry name" value="SPRY_dom"/>
</dbReference>
<dbReference type="InterPro" id="IPR050143">
    <property type="entry name" value="TRIM/RBCC"/>
</dbReference>
<dbReference type="InterPro" id="IPR027370">
    <property type="entry name" value="Znf-RING_euk"/>
</dbReference>
<dbReference type="InterPro" id="IPR000315">
    <property type="entry name" value="Znf_B-box"/>
</dbReference>
<dbReference type="InterPro" id="IPR001841">
    <property type="entry name" value="Znf_RING"/>
</dbReference>
<dbReference type="InterPro" id="IPR013083">
    <property type="entry name" value="Znf_RING/FYVE/PHD"/>
</dbReference>
<dbReference type="InterPro" id="IPR017907">
    <property type="entry name" value="Znf_RING_CS"/>
</dbReference>
<dbReference type="PANTHER" id="PTHR24103">
    <property type="entry name" value="E3 UBIQUITIN-PROTEIN LIGASE TRIM"/>
    <property type="match status" value="1"/>
</dbReference>
<dbReference type="Pfam" id="PF00622">
    <property type="entry name" value="SPRY"/>
    <property type="match status" value="1"/>
</dbReference>
<dbReference type="Pfam" id="PF00643">
    <property type="entry name" value="zf-B_box"/>
    <property type="match status" value="1"/>
</dbReference>
<dbReference type="Pfam" id="PF13445">
    <property type="entry name" value="zf-RING_UBOX"/>
    <property type="match status" value="1"/>
</dbReference>
<dbReference type="PRINTS" id="PR01407">
    <property type="entry name" value="BUTYPHLNCDUF"/>
</dbReference>
<dbReference type="SMART" id="SM00336">
    <property type="entry name" value="BBOX"/>
    <property type="match status" value="1"/>
</dbReference>
<dbReference type="SMART" id="SM00184">
    <property type="entry name" value="RING"/>
    <property type="match status" value="1"/>
</dbReference>
<dbReference type="SMART" id="SM00449">
    <property type="entry name" value="SPRY"/>
    <property type="match status" value="1"/>
</dbReference>
<dbReference type="SUPFAM" id="SSF57845">
    <property type="entry name" value="B-box zinc-binding domain"/>
    <property type="match status" value="1"/>
</dbReference>
<dbReference type="SUPFAM" id="SSF49899">
    <property type="entry name" value="Concanavalin A-like lectins/glucanases"/>
    <property type="match status" value="1"/>
</dbReference>
<dbReference type="SUPFAM" id="SSF57850">
    <property type="entry name" value="RING/U-box"/>
    <property type="match status" value="1"/>
</dbReference>
<dbReference type="PROSITE" id="PS50188">
    <property type="entry name" value="B302_SPRY"/>
    <property type="match status" value="1"/>
</dbReference>
<dbReference type="PROSITE" id="PS50119">
    <property type="entry name" value="ZF_BBOX"/>
    <property type="match status" value="1"/>
</dbReference>
<dbReference type="PROSITE" id="PS00518">
    <property type="entry name" value="ZF_RING_1"/>
    <property type="match status" value="1"/>
</dbReference>
<dbReference type="PROSITE" id="PS50089">
    <property type="entry name" value="ZF_RING_2"/>
    <property type="match status" value="1"/>
</dbReference>
<evidence type="ECO:0000250" key="1"/>
<evidence type="ECO:0000250" key="2">
    <source>
        <dbReference type="UniProtKB" id="Q0PF16"/>
    </source>
</evidence>
<evidence type="ECO:0000250" key="3">
    <source>
        <dbReference type="UniProtKB" id="Q9C035"/>
    </source>
</evidence>
<evidence type="ECO:0000255" key="4"/>
<evidence type="ECO:0000255" key="5">
    <source>
        <dbReference type="PROSITE-ProRule" id="PRU00024"/>
    </source>
</evidence>
<evidence type="ECO:0000255" key="6">
    <source>
        <dbReference type="PROSITE-ProRule" id="PRU00175"/>
    </source>
</evidence>
<evidence type="ECO:0000255" key="7">
    <source>
        <dbReference type="PROSITE-ProRule" id="PRU00548"/>
    </source>
</evidence>
<evidence type="ECO:0000305" key="8"/>
<feature type="initiator methionine" description="Removed" evidence="3">
    <location>
        <position position="1"/>
    </location>
</feature>
<feature type="chain" id="PRO_0000273473" description="Tripartite motif-containing protein 5">
    <location>
        <begin position="2"/>
        <end position="495"/>
    </location>
</feature>
<feature type="domain" description="B30.2/SPRY" evidence="7">
    <location>
        <begin position="283"/>
        <end position="495"/>
    </location>
</feature>
<feature type="zinc finger region" description="RING-type" evidence="6">
    <location>
        <begin position="15"/>
        <end position="60"/>
    </location>
</feature>
<feature type="zinc finger region" description="B box-type" evidence="5">
    <location>
        <begin position="92"/>
        <end position="133"/>
    </location>
</feature>
<feature type="region of interest" description="Required for interaction with GABARAP and for autophagy" evidence="2">
    <location>
        <begin position="187"/>
        <end position="200"/>
    </location>
</feature>
<feature type="coiled-coil region" evidence="4">
    <location>
        <begin position="137"/>
        <end position="225"/>
    </location>
</feature>
<feature type="binding site" evidence="5">
    <location>
        <position position="97"/>
    </location>
    <ligand>
        <name>Zn(2+)</name>
        <dbReference type="ChEBI" id="CHEBI:29105"/>
    </ligand>
</feature>
<feature type="binding site" evidence="5">
    <location>
        <position position="100"/>
    </location>
    <ligand>
        <name>Zn(2+)</name>
        <dbReference type="ChEBI" id="CHEBI:29105"/>
    </ligand>
</feature>
<feature type="binding site" evidence="5">
    <location>
        <position position="119"/>
    </location>
    <ligand>
        <name>Zn(2+)</name>
        <dbReference type="ChEBI" id="CHEBI:29105"/>
    </ligand>
</feature>
<feature type="binding site" evidence="5">
    <location>
        <position position="125"/>
    </location>
    <ligand>
        <name>Zn(2+)</name>
        <dbReference type="ChEBI" id="CHEBI:29105"/>
    </ligand>
</feature>
<feature type="modified residue" description="N-acetylalanine" evidence="3">
    <location>
        <position position="2"/>
    </location>
</feature>
<feature type="modified residue" description="Phosphoserine" evidence="3">
    <location>
        <position position="87"/>
    </location>
</feature>
<organism>
    <name type="scientific">Pygathrix nemaeus</name>
    <name type="common">Red-shanked douc langur</name>
    <dbReference type="NCBI Taxonomy" id="54133"/>
    <lineage>
        <taxon>Eukaryota</taxon>
        <taxon>Metazoa</taxon>
        <taxon>Chordata</taxon>
        <taxon>Craniata</taxon>
        <taxon>Vertebrata</taxon>
        <taxon>Euteleostomi</taxon>
        <taxon>Mammalia</taxon>
        <taxon>Eutheria</taxon>
        <taxon>Euarchontoglires</taxon>
        <taxon>Primates</taxon>
        <taxon>Haplorrhini</taxon>
        <taxon>Catarrhini</taxon>
        <taxon>Cercopithecidae</taxon>
        <taxon>Colobinae</taxon>
        <taxon>Pygathrix</taxon>
    </lineage>
</organism>
<reference key="1">
    <citation type="journal article" date="2005" name="Proc. Natl. Acad. Sci. U.S.A.">
        <title>Positive selection of primate TRIM5alpha identifies a critical species-specific retroviral restriction domain.</title>
        <authorList>
            <person name="Sawyer S.L."/>
            <person name="Wu L.I."/>
            <person name="Emerman M."/>
            <person name="Malik H.S."/>
        </authorList>
    </citation>
    <scope>NUCLEOTIDE SEQUENCE [GENOMIC DNA]</scope>
</reference>
<keyword id="KW-0007">Acetylation</keyword>
<keyword id="KW-0051">Antiviral defense</keyword>
<keyword id="KW-0072">Autophagy</keyword>
<keyword id="KW-0175">Coiled coil</keyword>
<keyword id="KW-0963">Cytoplasm</keyword>
<keyword id="KW-0391">Immunity</keyword>
<keyword id="KW-0399">Innate immunity</keyword>
<keyword id="KW-0479">Metal-binding</keyword>
<keyword id="KW-0539">Nucleus</keyword>
<keyword id="KW-0597">Phosphoprotein</keyword>
<keyword id="KW-0808">Transferase</keyword>
<keyword id="KW-0832">Ubl conjugation</keyword>
<keyword id="KW-0833">Ubl conjugation pathway</keyword>
<keyword id="KW-0862">Zinc</keyword>
<keyword id="KW-0863">Zinc-finger</keyword>
<name>TRIM5_PYGNE</name>
<comment type="function">
    <text evidence="3">Capsid-specific restriction factor that prevents infection from non-host-adapted retroviruses. Blocks viral replication early in the life cycle, after viral entry but before reverse transcription. In addition to acting as a capsid-specific restriction factor, also acts as a pattern recognition receptor that activates innate immune signaling in response to the retroviral capsid lattice. Binding to the viral capsid triggers its E3 ubiquitin ligase activity, and in concert with the heterodimeric ubiquitin conjugating enzyme complex UBE2V1-UBE2N (also known as UBC13-UEV1A complex) generates 'Lys-63'-linked polyubiquitin chains, which in turn are catalysts in the autophosphorylation of the MAP3K7/TAK1 complex (includes TAK1, TAB2, and TAB3). Activation of the MAP3K7/TAK1 complex by autophosphorylation results in the induction and expression of NF-kappa-B and MAPK-responsive inflammatory genes, thereby leading to an innate immune response in the infected cell. Plays a role in regulating autophagy through activation of autophagy regulator BECN1 by causing its dissociation from its inhibitors BCL2 and TAB2.</text>
</comment>
<comment type="catalytic activity">
    <reaction>
        <text>S-ubiquitinyl-[E2 ubiquitin-conjugating enzyme]-L-cysteine + [acceptor protein]-L-lysine = [E2 ubiquitin-conjugating enzyme]-L-cysteine + N(6)-ubiquitinyl-[acceptor protein]-L-lysine.</text>
        <dbReference type="EC" id="2.3.2.27"/>
    </reaction>
</comment>
<comment type="pathway">
    <text>Protein modification; protein ubiquitination.</text>
</comment>
<comment type="subunit">
    <text evidence="2 3">Can form homodimers and homotrimers. In addition to lower-order dimerization, also exhibits a higher-order multimerization and both low- and high-order multimerizations are essential for its restriction activity. Interacts with BTBD1 and BTBD2. Interacts with PSMC4, PSMC5, PSMD7 and HSPA8/HSC70. Interacts (via B30.2/SPRY domain) with HSPA1A/B. Interacts with PSMC2, MAP3K7/TAK1, TAB2 and TAB3. Interacts with SQSTM1. Interacts with TRIM6 and TRIM34. Interacts with ULK1 (phosphorylated form), GABARAP, GABARAPL1, GABARAPL2, MAP1LC3A, MAP1LC3C and BECN1.</text>
</comment>
<comment type="subcellular location">
    <subcellularLocation>
        <location evidence="2">Cytoplasm</location>
    </subcellularLocation>
    <subcellularLocation>
        <location evidence="2">Nucleus</location>
    </subcellularLocation>
    <text evidence="2">Predominantly localizes in cytoplasmic bodies. Localization may be influenced by the coexpression of other TRIM proteins, hence partial nuclear localization is observed in the presence of TRIM22 or TRIM27. In cytoplasmic bodies, colocalizes with proteasomal subunits and SQSTM1.</text>
</comment>
<comment type="domain">
    <text evidence="2 3">The B box-type zinc finger domain and the coiled-coil domain contribute to the higher and low order multimerization respectively which is essential for restriction activity. The coiled coil domain is important for higher order multimerization by promoting the initial dimerization.</text>
</comment>
<comment type="domain">
    <text evidence="1">The B30.2/SPRY domain acts as a capsid recognition domain. Polymorphisms in this domain explain the observed species-specific differences among orthologs (By similarity).</text>
</comment>
<comment type="domain">
    <text evidence="1">The RING-type zinc finger domain confers E3 ubiquitin ligase activity and is essential for retrovirus restriction activity, autoubiquitination and higher-order multimerization.</text>
</comment>
<comment type="PTM">
    <text evidence="1">Degraded in a proteasome-independent fashion in the absence of viral infection but in a proteasome-dependent fashion following exposure to restriction sensitive virus.</text>
</comment>
<comment type="PTM">
    <text evidence="1">Autoubiquitinated in a RING finger- and UBE2D2-dependent manner. Monoubiquitinated by TRIM21. Deubiquitinated by Yersinia YopJ. Ubiquitination may not lead to proteasomal degradation (By similarity).</text>
</comment>
<comment type="similarity">
    <text evidence="8">Belongs to the TRIM/RBCC family.</text>
</comment>
<proteinExistence type="inferred from homology"/>
<accession>Q5D7I9</accession>
<sequence>MASGILVNIKEEVTCPICLELLTEPLSLHCGHSFCQACITANHKKSMLYKEGERSCPVCRISYQPENIRPNRHVANIVEKLREVKLSPEEGQKVDHCARHGEKLLLFCQEDRKVICWLCERSQEHRGHHTFLMEEVAQEYHVKLQTALEMLRQKQQEAEKLEADIREEKASWKIQIDCDKTNVLADFEQLREILDWEESNELQNLEKEEEDILKSLTKSETEMVQQTQYMRELISDLEHRLQGSMMELLQGVDGIIKRIENMTLKKPKTFPKNQRRVFRAPDLKGILDMFRELTDVRRYWVDVTLAPNNISHAVIAEDKRQVSSPNPQIMCRARGTLFQSLKNFIYCTGVLGSQSITSGKHYWEVDVSKKSAWILGVCAGFQPDAMYNIEQNENYQPKYGYWVIGLQEGVKYNVFQDGSSHTPFAPFIVPLSVIICPDRVGVFVDYEACTVSFFNITNHGFLIYKFSQCSFSKPVFPYLNPRKCTVPMTLCSPSS</sequence>
<gene>
    <name type="primary">TRIM5</name>
</gene>